<accession>Q6BX71</accession>
<proteinExistence type="inferred from homology"/>
<keyword id="KW-0012">Acyltransferase</keyword>
<keyword id="KW-0350">Heme biosynthesis</keyword>
<keyword id="KW-0496">Mitochondrion</keyword>
<keyword id="KW-0663">Pyridoxal phosphate</keyword>
<keyword id="KW-1185">Reference proteome</keyword>
<keyword id="KW-0808">Transferase</keyword>
<keyword id="KW-0809">Transit peptide</keyword>
<reference key="1">
    <citation type="journal article" date="2004" name="Nature">
        <title>Genome evolution in yeasts.</title>
        <authorList>
            <person name="Dujon B."/>
            <person name="Sherman D."/>
            <person name="Fischer G."/>
            <person name="Durrens P."/>
            <person name="Casaregola S."/>
            <person name="Lafontaine I."/>
            <person name="de Montigny J."/>
            <person name="Marck C."/>
            <person name="Neuveglise C."/>
            <person name="Talla E."/>
            <person name="Goffard N."/>
            <person name="Frangeul L."/>
            <person name="Aigle M."/>
            <person name="Anthouard V."/>
            <person name="Babour A."/>
            <person name="Barbe V."/>
            <person name="Barnay S."/>
            <person name="Blanchin S."/>
            <person name="Beckerich J.-M."/>
            <person name="Beyne E."/>
            <person name="Bleykasten C."/>
            <person name="Boisrame A."/>
            <person name="Boyer J."/>
            <person name="Cattolico L."/>
            <person name="Confanioleri F."/>
            <person name="de Daruvar A."/>
            <person name="Despons L."/>
            <person name="Fabre E."/>
            <person name="Fairhead C."/>
            <person name="Ferry-Dumazet H."/>
            <person name="Groppi A."/>
            <person name="Hantraye F."/>
            <person name="Hennequin C."/>
            <person name="Jauniaux N."/>
            <person name="Joyet P."/>
            <person name="Kachouri R."/>
            <person name="Kerrest A."/>
            <person name="Koszul R."/>
            <person name="Lemaire M."/>
            <person name="Lesur I."/>
            <person name="Ma L."/>
            <person name="Muller H."/>
            <person name="Nicaud J.-M."/>
            <person name="Nikolski M."/>
            <person name="Oztas S."/>
            <person name="Ozier-Kalogeropoulos O."/>
            <person name="Pellenz S."/>
            <person name="Potier S."/>
            <person name="Richard G.-F."/>
            <person name="Straub M.-L."/>
            <person name="Suleau A."/>
            <person name="Swennen D."/>
            <person name="Tekaia F."/>
            <person name="Wesolowski-Louvel M."/>
            <person name="Westhof E."/>
            <person name="Wirth B."/>
            <person name="Zeniou-Meyer M."/>
            <person name="Zivanovic Y."/>
            <person name="Bolotin-Fukuhara M."/>
            <person name="Thierry A."/>
            <person name="Bouchier C."/>
            <person name="Caudron B."/>
            <person name="Scarpelli C."/>
            <person name="Gaillardin C."/>
            <person name="Weissenbach J."/>
            <person name="Wincker P."/>
            <person name="Souciet J.-L."/>
        </authorList>
    </citation>
    <scope>NUCLEOTIDE SEQUENCE [LARGE SCALE GENOMIC DNA]</scope>
    <source>
        <strain>ATCC 36239 / CBS 767 / BCRC 21394 / JCM 1990 / NBRC 0083 / IGC 2968</strain>
    </source>
</reference>
<comment type="function">
    <text evidence="1">Catalyzes the synthesis of 5-aminolevulinate (ALA) from succinyl-CoA and glycine, the first and rate-limiting step in heme biosynthesis.</text>
</comment>
<comment type="catalytic activity">
    <reaction evidence="1">
        <text>succinyl-CoA + glycine + H(+) = 5-aminolevulinate + CO2 + CoA</text>
        <dbReference type="Rhea" id="RHEA:12921"/>
        <dbReference type="ChEBI" id="CHEBI:15378"/>
        <dbReference type="ChEBI" id="CHEBI:16526"/>
        <dbReference type="ChEBI" id="CHEBI:57287"/>
        <dbReference type="ChEBI" id="CHEBI:57292"/>
        <dbReference type="ChEBI" id="CHEBI:57305"/>
        <dbReference type="ChEBI" id="CHEBI:356416"/>
        <dbReference type="EC" id="2.3.1.37"/>
    </reaction>
</comment>
<comment type="cofactor">
    <cofactor evidence="1">
        <name>pyridoxal 5'-phosphate</name>
        <dbReference type="ChEBI" id="CHEBI:597326"/>
    </cofactor>
</comment>
<comment type="pathway">
    <text evidence="1">Porphyrin-containing compound metabolism; protoporphyrin-IX biosynthesis; 5-aminolevulinate from glycine: step 1/1.</text>
</comment>
<comment type="subunit">
    <text evidence="1">Homodimer.</text>
</comment>
<comment type="subcellular location">
    <subcellularLocation>
        <location evidence="1">Mitochondrion matrix</location>
    </subcellularLocation>
</comment>
<comment type="similarity">
    <text evidence="4">Belongs to the class-II pyridoxal-phosphate-dependent aminotransferase family.</text>
</comment>
<evidence type="ECO:0000250" key="1">
    <source>
        <dbReference type="UniProtKB" id="P09950"/>
    </source>
</evidence>
<evidence type="ECO:0000250" key="2">
    <source>
        <dbReference type="UniProtKB" id="P18079"/>
    </source>
</evidence>
<evidence type="ECO:0000255" key="3"/>
<evidence type="ECO:0000305" key="4"/>
<dbReference type="EC" id="2.3.1.37"/>
<dbReference type="EMBL" id="CR382134">
    <property type="protein sequence ID" value="CAG85193.1"/>
    <property type="molecule type" value="Genomic_DNA"/>
</dbReference>
<dbReference type="RefSeq" id="XP_457198.1">
    <property type="nucleotide sequence ID" value="XM_457198.1"/>
</dbReference>
<dbReference type="SMR" id="Q6BX71"/>
<dbReference type="FunCoup" id="Q6BX71">
    <property type="interactions" value="501"/>
</dbReference>
<dbReference type="STRING" id="284592.Q6BX71"/>
<dbReference type="GeneID" id="2913002"/>
<dbReference type="KEGG" id="dha:DEHA2B05478g"/>
<dbReference type="VEuPathDB" id="FungiDB:DEHA2B05478g"/>
<dbReference type="eggNOG" id="KOG1360">
    <property type="taxonomic scope" value="Eukaryota"/>
</dbReference>
<dbReference type="HOGENOM" id="CLU_015846_6_0_1"/>
<dbReference type="InParanoid" id="Q6BX71"/>
<dbReference type="OMA" id="ARRCPIM"/>
<dbReference type="OrthoDB" id="10263824at2759"/>
<dbReference type="UniPathway" id="UPA00251">
    <property type="reaction ID" value="UER00375"/>
</dbReference>
<dbReference type="Proteomes" id="UP000000599">
    <property type="component" value="Chromosome B"/>
</dbReference>
<dbReference type="GO" id="GO:0005759">
    <property type="term" value="C:mitochondrial matrix"/>
    <property type="evidence" value="ECO:0007669"/>
    <property type="project" value="UniProtKB-SubCell"/>
</dbReference>
<dbReference type="GO" id="GO:0003870">
    <property type="term" value="F:5-aminolevulinate synthase activity"/>
    <property type="evidence" value="ECO:0007669"/>
    <property type="project" value="UniProtKB-EC"/>
</dbReference>
<dbReference type="GO" id="GO:0030170">
    <property type="term" value="F:pyridoxal phosphate binding"/>
    <property type="evidence" value="ECO:0007669"/>
    <property type="project" value="InterPro"/>
</dbReference>
<dbReference type="GO" id="GO:1902117">
    <property type="term" value="P:positive regulation of organelle assembly"/>
    <property type="evidence" value="ECO:0007669"/>
    <property type="project" value="EnsemblFungi"/>
</dbReference>
<dbReference type="GO" id="GO:0006782">
    <property type="term" value="P:protoporphyrinogen IX biosynthetic process"/>
    <property type="evidence" value="ECO:0007669"/>
    <property type="project" value="UniProtKB-UniPathway"/>
</dbReference>
<dbReference type="CDD" id="cd06454">
    <property type="entry name" value="KBL_like"/>
    <property type="match status" value="1"/>
</dbReference>
<dbReference type="FunFam" id="3.40.640.10:FF:000006">
    <property type="entry name" value="5-aminolevulinate synthase, mitochondrial"/>
    <property type="match status" value="1"/>
</dbReference>
<dbReference type="Gene3D" id="3.90.1150.10">
    <property type="entry name" value="Aspartate Aminotransferase, domain 1"/>
    <property type="match status" value="1"/>
</dbReference>
<dbReference type="Gene3D" id="3.40.640.10">
    <property type="entry name" value="Type I PLP-dependent aspartate aminotransferase-like (Major domain)"/>
    <property type="match status" value="1"/>
</dbReference>
<dbReference type="InterPro" id="IPR010961">
    <property type="entry name" value="4pyrrol_synth_NH2levulA_synth"/>
</dbReference>
<dbReference type="InterPro" id="IPR001917">
    <property type="entry name" value="Aminotrans_II_pyridoxalP_BS"/>
</dbReference>
<dbReference type="InterPro" id="IPR004839">
    <property type="entry name" value="Aminotransferase_I/II_large"/>
</dbReference>
<dbReference type="InterPro" id="IPR050087">
    <property type="entry name" value="AON_synthase_class-II"/>
</dbReference>
<dbReference type="InterPro" id="IPR015424">
    <property type="entry name" value="PyrdxlP-dep_Trfase"/>
</dbReference>
<dbReference type="InterPro" id="IPR015421">
    <property type="entry name" value="PyrdxlP-dep_Trfase_major"/>
</dbReference>
<dbReference type="InterPro" id="IPR015422">
    <property type="entry name" value="PyrdxlP-dep_Trfase_small"/>
</dbReference>
<dbReference type="NCBIfam" id="TIGR01821">
    <property type="entry name" value="5aminolev_synth"/>
    <property type="match status" value="1"/>
</dbReference>
<dbReference type="PANTHER" id="PTHR13693:SF102">
    <property type="entry name" value="2-AMINO-3-KETOBUTYRATE COENZYME A LIGASE, MITOCHONDRIAL"/>
    <property type="match status" value="1"/>
</dbReference>
<dbReference type="PANTHER" id="PTHR13693">
    <property type="entry name" value="CLASS II AMINOTRANSFERASE/8-AMINO-7-OXONONANOATE SYNTHASE"/>
    <property type="match status" value="1"/>
</dbReference>
<dbReference type="Pfam" id="PF00155">
    <property type="entry name" value="Aminotran_1_2"/>
    <property type="match status" value="1"/>
</dbReference>
<dbReference type="SUPFAM" id="SSF53383">
    <property type="entry name" value="PLP-dependent transferases"/>
    <property type="match status" value="1"/>
</dbReference>
<dbReference type="PROSITE" id="PS00599">
    <property type="entry name" value="AA_TRANSFER_CLASS_2"/>
    <property type="match status" value="1"/>
</dbReference>
<feature type="transit peptide" description="Mitochondrion" evidence="3">
    <location>
        <begin position="1"/>
        <end position="55"/>
    </location>
</feature>
<feature type="chain" id="PRO_0000001239" description="5-aminolevulinate synthase, mitochondrial">
    <location>
        <begin position="56"/>
        <end position="575"/>
    </location>
</feature>
<feature type="active site" evidence="2">
    <location>
        <position position="364"/>
    </location>
</feature>
<feature type="binding site" evidence="2">
    <location>
        <position position="124"/>
    </location>
    <ligand>
        <name>substrate</name>
    </ligand>
</feature>
<feature type="binding site" evidence="2">
    <location>
        <position position="237"/>
    </location>
    <ligand>
        <name>substrate</name>
    </ligand>
</feature>
<feature type="binding site" evidence="2">
    <location>
        <position position="256"/>
    </location>
    <ligand>
        <name>substrate</name>
    </ligand>
</feature>
<feature type="binding site" description="in other chain" evidence="2">
    <location>
        <position position="289"/>
    </location>
    <ligand>
        <name>pyridoxal 5'-phosphate</name>
        <dbReference type="ChEBI" id="CHEBI:597326"/>
        <note>ligand shared between dimeric partners</note>
    </ligand>
</feature>
<feature type="binding site" description="in other chain" evidence="2">
    <location>
        <position position="317"/>
    </location>
    <ligand>
        <name>pyridoxal 5'-phosphate</name>
        <dbReference type="ChEBI" id="CHEBI:597326"/>
        <note>ligand shared between dimeric partners</note>
    </ligand>
</feature>
<feature type="binding site" description="in other chain" evidence="2">
    <location>
        <position position="361"/>
    </location>
    <ligand>
        <name>pyridoxal 5'-phosphate</name>
        <dbReference type="ChEBI" id="CHEBI:597326"/>
        <note>ligand shared between dimeric partners</note>
    </ligand>
</feature>
<feature type="binding site" evidence="2">
    <location>
        <position position="393"/>
    </location>
    <ligand>
        <name>pyridoxal 5'-phosphate</name>
        <dbReference type="ChEBI" id="CHEBI:597326"/>
        <note>ligand shared between dimeric partners</note>
    </ligand>
</feature>
<feature type="binding site" evidence="2">
    <location>
        <position position="394"/>
    </location>
    <ligand>
        <name>pyridoxal 5'-phosphate</name>
        <dbReference type="ChEBI" id="CHEBI:597326"/>
        <note>ligand shared between dimeric partners</note>
    </ligand>
</feature>
<feature type="binding site" evidence="2">
    <location>
        <position position="479"/>
    </location>
    <ligand>
        <name>substrate</name>
    </ligand>
</feature>
<feature type="modified residue" description="N6-(pyridoxal phosphate)lysine" evidence="2">
    <location>
        <position position="364"/>
    </location>
</feature>
<organism>
    <name type="scientific">Debaryomyces hansenii (strain ATCC 36239 / CBS 767 / BCRC 21394 / JCM 1990 / NBRC 0083 / IGC 2968)</name>
    <name type="common">Yeast</name>
    <name type="synonym">Torulaspora hansenii</name>
    <dbReference type="NCBI Taxonomy" id="284592"/>
    <lineage>
        <taxon>Eukaryota</taxon>
        <taxon>Fungi</taxon>
        <taxon>Dikarya</taxon>
        <taxon>Ascomycota</taxon>
        <taxon>Saccharomycotina</taxon>
        <taxon>Pichiomycetes</taxon>
        <taxon>Debaryomycetaceae</taxon>
        <taxon>Debaryomyces</taxon>
    </lineage>
</organism>
<name>HEM1_DEBHA</name>
<sequence length="575" mass="62652">MESITRVSMSVCPFVKSSSAQALRQLSKNSALTSQARQCPFMGAALNAKESTRSYSSATKPVRATASSLASNPPSTMQSKYSFKAEELVGNKDAINLESKENTFDFKGYLNSELSKKRTDKSYRFFNNINRLANEFPKAHRSEENDKVTVWCSNDYLGMGKNENTINEMKRVLTKYGSGAGGTRNIAGHNIHALKLESELAALHKHEAALVFSSCFVANDAVLSLFGQKIKDLVIFSDELNHASMIQGIRNSRAKKQVFKHNDLADLEEKLAQYPKSTPKLIAFESVYSMCGSIAPIEAICDLAEKYGALTFLDEVHAVGMYGPHGAGVAEHLDFDAHLKSGIASPQTQTVMNRVDMVTGTLGKAYGTVGGYITGKANLIDWFRSFAPGFIFTTTLPPSIMAGSSASIRYQRSTLQDRIAQQTNTRYVKNNLTDIGIPVIPNPSHIVPVLVGNALDAKKASDLLLDKYNIYVQAINFPTVPIGQERLRITPTPGHGPELSNQLIGALDSVFNELSLSRIGDWEGKGGLCGVGEPDIEPIEHIWTSEQLALTDADINPNVIDPVIQPIGVSSGVRD</sequence>
<gene>
    <name type="primary">HEM1</name>
    <name type="ordered locus">DEHA2B05478g</name>
</gene>
<protein>
    <recommendedName>
        <fullName>5-aminolevulinate synthase, mitochondrial</fullName>
        <ecNumber>2.3.1.37</ecNumber>
    </recommendedName>
    <alternativeName>
        <fullName>5-aminolevulinic acid synthase</fullName>
    </alternativeName>
    <alternativeName>
        <fullName>Delta-ALA synthase</fullName>
    </alternativeName>
    <alternativeName>
        <fullName>Delta-aminolevulinate synthase</fullName>
    </alternativeName>
</protein>